<evidence type="ECO:0000250" key="1">
    <source>
        <dbReference type="UniProtKB" id="O16159"/>
    </source>
</evidence>
<evidence type="ECO:0000250" key="2">
    <source>
        <dbReference type="UniProtKB" id="P01038"/>
    </source>
</evidence>
<evidence type="ECO:0000255" key="3"/>
<evidence type="ECO:0000255" key="4">
    <source>
        <dbReference type="RuleBase" id="RU362130"/>
    </source>
</evidence>
<evidence type="ECO:0000269" key="5">
    <source>
    </source>
</evidence>
<evidence type="ECO:0000269" key="6">
    <source>
    </source>
</evidence>
<evidence type="ECO:0000269" key="7">
    <source>
    </source>
</evidence>
<evidence type="ECO:0000303" key="8">
    <source>
    </source>
</evidence>
<evidence type="ECO:0000305" key="9"/>
<evidence type="ECO:0000312" key="10">
    <source>
        <dbReference type="EMBL" id="AAC47623.1"/>
    </source>
</evidence>
<evidence type="ECO:0000312" key="11">
    <source>
        <dbReference type="EMBL" id="AAD51085.1"/>
    </source>
</evidence>
<evidence type="ECO:0000312" key="12">
    <source>
        <dbReference type="Proteomes" id="UP000006672"/>
    </source>
</evidence>
<protein>
    <recommendedName>
        <fullName evidence="9">Cystatin cpi-1</fullName>
    </recommendedName>
</protein>
<accession>P90698</accession>
<accession>A0A0K0JBB7</accession>
<proteinExistence type="evidence at transcript level"/>
<comment type="function">
    <text evidence="1 5">Cysteine protease inhibitor which inhibits members of the peptidase C1 family (By similarity). Does not inhibit asparaginyl endopeptidase (PubMed:15664654).</text>
</comment>
<comment type="developmental stage">
    <text evidence="6 7">In the vector stage, expression starts at the L2 larval stage and continues throughout the L3 infective larval stage. After infecting the host, expression rapidly decreases and is absent from the L4 larval stage and in adults (PubMed:18249028, PubMed:9233676). Not expressed in microfilariae (PubMed:9233676).</text>
</comment>
<comment type="similarity">
    <text evidence="3 4">Belongs to the cystatin family.</text>
</comment>
<sequence length="127" mass="14612">MFFPIVWLSVLLIISKSFAREIRLSRATYNEDDEEIQEVAEKAMEQVNDQTRYRNLYKLVRVISAQTQVVAGIKYYLTILAAPTTCRKGAVGMNPMKCTIDSSKPTKQFKIEVWSAPWQNTFKVTLT</sequence>
<feature type="signal peptide" evidence="3">
    <location>
        <begin position="1"/>
        <end position="19"/>
    </location>
</feature>
<feature type="chain" id="PRO_5013420733" description="Cystatin cpi-1" evidence="3">
    <location>
        <begin position="20"/>
        <end position="127"/>
    </location>
</feature>
<feature type="short sequence motif" description="Secondary area of contact" evidence="9">
    <location>
        <begin position="68"/>
        <end position="72"/>
    </location>
</feature>
<feature type="disulfide bond" evidence="2">
    <location>
        <begin position="86"/>
        <end position="98"/>
    </location>
</feature>
<reference evidence="10" key="1">
    <citation type="journal article" date="1997" name="Mol. Biochem. Parasitol.">
        <title>Differentially expressed, abundant trans-spliced cDNAs from larval Brugia malayi.</title>
        <authorList>
            <person name="Gregory W.F."/>
            <person name="Blaxter M.L."/>
            <person name="Maizels R.M."/>
        </authorList>
    </citation>
    <scope>NUCLEOTIDE SEQUENCE [MRNA]</scope>
    <scope>DEVELOPMENTAL STAGE</scope>
</reference>
<reference evidence="11" key="2">
    <citation type="submission" date="1999-08" db="EMBL/GenBank/DDBJ databases">
        <title>Two distinct cystatin-type cysteine protease inhibitors from the parasitic nematode Brugia malayi.</title>
        <authorList>
            <person name="Gregory W.F."/>
            <person name="Maizels R.M."/>
        </authorList>
    </citation>
    <scope>NUCLEOTIDE SEQUENCE [GENOMIC DNA]</scope>
</reference>
<reference evidence="12" key="3">
    <citation type="journal article" date="2007" name="Science">
        <title>Draft genome of the filarial nematode parasite Brugia malayi.</title>
        <authorList>
            <person name="Ghedin E."/>
            <person name="Wang S."/>
            <person name="Spiro D."/>
            <person name="Caler E."/>
            <person name="Zhao Q."/>
            <person name="Crabtree J."/>
            <person name="Allen J.E."/>
            <person name="Delcher A.L."/>
            <person name="Guiliano D.B."/>
            <person name="Miranda-Saavedra D."/>
            <person name="Angiuoli S.V."/>
            <person name="Creasy T."/>
            <person name="Amedeo P."/>
            <person name="Haas B."/>
            <person name="El-Sayed N.M."/>
            <person name="Wortman J.R."/>
            <person name="Feldblyum T."/>
            <person name="Tallon L."/>
            <person name="Schatz M."/>
            <person name="Shumway M."/>
            <person name="Koo H."/>
            <person name="Salzberg S.L."/>
            <person name="Schobel S."/>
            <person name="Pertea M."/>
            <person name="Pop M."/>
            <person name="White O."/>
            <person name="Barton G.J."/>
            <person name="Carlow C.K.S."/>
            <person name="Crawford M.J."/>
            <person name="Daub J."/>
            <person name="Dimmic M.W."/>
            <person name="Estes C.F."/>
            <person name="Foster J.M."/>
            <person name="Ganatra M."/>
            <person name="Gregory W.F."/>
            <person name="Johnson N.M."/>
            <person name="Jin J."/>
            <person name="Komuniecki R."/>
            <person name="Korf I."/>
            <person name="Kumar S."/>
            <person name="Laney S."/>
            <person name="Li B.-W."/>
            <person name="Li W."/>
            <person name="Lindblom T.H."/>
            <person name="Lustigman S."/>
            <person name="Ma D."/>
            <person name="Maina C.V."/>
            <person name="Martin D.M."/>
            <person name="McCarter J.P."/>
            <person name="McReynolds L."/>
            <person name="Mitreva M."/>
            <person name="Nutman T.B."/>
            <person name="Parkinson J."/>
            <person name="Peregrin-Alvarez J.M."/>
            <person name="Poole C."/>
            <person name="Ren Q."/>
            <person name="Saunders L."/>
            <person name="Sluder A.E."/>
            <person name="Smith K."/>
            <person name="Stanke M."/>
            <person name="Unnasch T.R."/>
            <person name="Ware J."/>
            <person name="Wei A.D."/>
            <person name="Weil G."/>
            <person name="Williams D.J."/>
            <person name="Zhang Y."/>
            <person name="Williams S.A."/>
            <person name="Fraser-Liggett C."/>
            <person name="Slatko B."/>
            <person name="Blaxter M.L."/>
            <person name="Scott A.L."/>
        </authorList>
    </citation>
    <scope>NUCLEOTIDE SEQUENCE [LARGE SCALE GENOMIC DNA]</scope>
    <source>
        <strain evidence="12">FR3</strain>
    </source>
</reference>
<reference evidence="9" key="4">
    <citation type="journal article" date="2005" name="Mol. Biochem. Parasitol.">
        <title>Bm-CPI-2, a cystatin from Brugia malayi nematode parasites, differs from Caenorhabditis elegans cystatins in a specific site mediating inhibition of the antigen-processing enzyme AEP.</title>
        <authorList>
            <person name="Murray J."/>
            <person name="Manoury B."/>
            <person name="Balic A."/>
            <person name="Watts C."/>
            <person name="Maizels R.M."/>
        </authorList>
    </citation>
    <scope>FUNCTION</scope>
</reference>
<reference evidence="9" key="5">
    <citation type="journal article" date="2008" name="Int. J. Biochem. Cell Biol.">
        <title>Cystatins from filarial parasites: evolution, adaptation and function in the host-parasite relationship.</title>
        <authorList>
            <person name="Gregory W.F."/>
            <person name="Maizels R.M."/>
        </authorList>
    </citation>
    <scope>DEVELOPMENTAL STAGE</scope>
</reference>
<gene>
    <name evidence="8" type="primary">cpi-1</name>
    <name type="ORF">Bm1_20105</name>
</gene>
<organism evidence="10">
    <name type="scientific">Brugia malayi</name>
    <name type="common">Filarial nematode worm</name>
    <dbReference type="NCBI Taxonomy" id="6279"/>
    <lineage>
        <taxon>Eukaryota</taxon>
        <taxon>Metazoa</taxon>
        <taxon>Ecdysozoa</taxon>
        <taxon>Nematoda</taxon>
        <taxon>Chromadorea</taxon>
        <taxon>Rhabditida</taxon>
        <taxon>Spirurina</taxon>
        <taxon>Spiruromorpha</taxon>
        <taxon>Filarioidea</taxon>
        <taxon>Onchocercidae</taxon>
        <taxon>Brugia</taxon>
    </lineage>
</organism>
<keyword id="KW-1015">Disulfide bond</keyword>
<keyword id="KW-0646">Protease inhibitor</keyword>
<keyword id="KW-1185">Reference proteome</keyword>
<keyword id="KW-0732">Signal</keyword>
<keyword id="KW-0789">Thiol protease inhibitor</keyword>
<name>CPI1_BRUMA</name>
<dbReference type="EMBL" id="U80972">
    <property type="protein sequence ID" value="AAC47623.1"/>
    <property type="molecule type" value="mRNA"/>
</dbReference>
<dbReference type="EMBL" id="AF177192">
    <property type="protein sequence ID" value="AAD51085.1"/>
    <property type="molecule type" value="Genomic_DNA"/>
</dbReference>
<dbReference type="EMBL" id="LN856902">
    <property type="protein sequence ID" value="CDP93728.1"/>
    <property type="molecule type" value="Genomic_DNA"/>
</dbReference>
<dbReference type="SMR" id="P90698"/>
<dbReference type="STRING" id="6279.P90698"/>
<dbReference type="MEROPS" id="I25.043"/>
<dbReference type="EnsemblMetazoa" id="Bm367.1">
    <property type="protein sequence ID" value="Bm367.1"/>
    <property type="gene ID" value="WBGene00220628"/>
</dbReference>
<dbReference type="GeneID" id="6098930"/>
<dbReference type="KEGG" id="bmy:BM_BM367"/>
<dbReference type="CTD" id="6098930"/>
<dbReference type="WormBase" id="Bm367">
    <property type="protein sequence ID" value="BM02229"/>
    <property type="gene ID" value="WBGene00220628"/>
</dbReference>
<dbReference type="HOGENOM" id="CLU_118168_0_0_1"/>
<dbReference type="InParanoid" id="P90698"/>
<dbReference type="OMA" id="EVWSAPW"/>
<dbReference type="OrthoDB" id="110606at2759"/>
<dbReference type="Proteomes" id="UP000006672">
    <property type="component" value="Unassembled WGS sequence"/>
</dbReference>
<dbReference type="GO" id="GO:0005737">
    <property type="term" value="C:cytoplasm"/>
    <property type="evidence" value="ECO:0007669"/>
    <property type="project" value="TreeGrafter"/>
</dbReference>
<dbReference type="GO" id="GO:0005615">
    <property type="term" value="C:extracellular space"/>
    <property type="evidence" value="ECO:0007669"/>
    <property type="project" value="TreeGrafter"/>
</dbReference>
<dbReference type="GO" id="GO:0031982">
    <property type="term" value="C:vesicle"/>
    <property type="evidence" value="ECO:0007669"/>
    <property type="project" value="TreeGrafter"/>
</dbReference>
<dbReference type="GO" id="GO:0004869">
    <property type="term" value="F:cysteine-type endopeptidase inhibitor activity"/>
    <property type="evidence" value="ECO:0000314"/>
    <property type="project" value="UniProtKB"/>
</dbReference>
<dbReference type="CDD" id="cd00042">
    <property type="entry name" value="CY"/>
    <property type="match status" value="1"/>
</dbReference>
<dbReference type="FunFam" id="3.10.450.10:FF:000004">
    <property type="entry name" value="Cystatin C"/>
    <property type="match status" value="1"/>
</dbReference>
<dbReference type="Gene3D" id="3.10.450.10">
    <property type="match status" value="1"/>
</dbReference>
<dbReference type="InterPro" id="IPR000010">
    <property type="entry name" value="Cystatin_dom"/>
</dbReference>
<dbReference type="InterPro" id="IPR046350">
    <property type="entry name" value="Cystatin_sf"/>
</dbReference>
<dbReference type="PANTHER" id="PTHR46186">
    <property type="entry name" value="CYSTATIN"/>
    <property type="match status" value="1"/>
</dbReference>
<dbReference type="PANTHER" id="PTHR46186:SF2">
    <property type="entry name" value="CYSTATIN"/>
    <property type="match status" value="1"/>
</dbReference>
<dbReference type="Pfam" id="PF00031">
    <property type="entry name" value="Cystatin"/>
    <property type="match status" value="1"/>
</dbReference>
<dbReference type="SMART" id="SM00043">
    <property type="entry name" value="CY"/>
    <property type="match status" value="1"/>
</dbReference>
<dbReference type="SUPFAM" id="SSF54403">
    <property type="entry name" value="Cystatin/monellin"/>
    <property type="match status" value="1"/>
</dbReference>